<accession>P0CA73</accession>
<sequence length="175" mass="20555">MVVYDLLVSLSKESIDVLRFIETNLAAFNQQYIFFNIQRKNSIMTPLLITPQQEKISQIVEFLMDEYNKSNRRPGPPREQPMQAYPLLSYQQSSEEQPMMPYQQPPGDDDQPYEQIYHKKHASQQVNTELSDYYQHILALGDEDKGMDSMLKLPERAKRESDDEDDMFPIKKLTT</sequence>
<proteinExistence type="inferred from homology"/>
<name>VF171_ASFK5</name>
<comment type="subcellular location">
    <subcellularLocation>
        <location evidence="1">Virion</location>
    </subcellularLocation>
</comment>
<comment type="induction">
    <text evidence="3">Expressed in the late phase of the viral replicative cycle.</text>
</comment>
<comment type="similarity">
    <text evidence="3">Belongs to the asfivirus H171R family.</text>
</comment>
<reference key="1">
    <citation type="submission" date="2003-03" db="EMBL/GenBank/DDBJ databases">
        <title>African swine fever virus genomes.</title>
        <authorList>
            <person name="Kutish G.F."/>
            <person name="Rock D.L."/>
        </authorList>
    </citation>
    <scope>NUCLEOTIDE SEQUENCE [LARGE SCALE GENOMIC DNA]</scope>
</reference>
<feature type="chain" id="PRO_0000373554" description="Uncharacterized protein H171R">
    <location>
        <begin position="1"/>
        <end position="175"/>
    </location>
</feature>
<feature type="region of interest" description="Disordered" evidence="2">
    <location>
        <begin position="68"/>
        <end position="111"/>
    </location>
</feature>
<feature type="region of interest" description="Disordered" evidence="2">
    <location>
        <begin position="154"/>
        <end position="175"/>
    </location>
</feature>
<feature type="compositionally biased region" description="Low complexity" evidence="2">
    <location>
        <begin position="95"/>
        <end position="106"/>
    </location>
</feature>
<organism>
    <name type="scientific">African swine fever virus (isolate Pig/Kenya/KEN-50/1950)</name>
    <name type="common">ASFV</name>
    <dbReference type="NCBI Taxonomy" id="561445"/>
    <lineage>
        <taxon>Viruses</taxon>
        <taxon>Varidnaviria</taxon>
        <taxon>Bamfordvirae</taxon>
        <taxon>Nucleocytoviricota</taxon>
        <taxon>Pokkesviricetes</taxon>
        <taxon>Asfuvirales</taxon>
        <taxon>Asfarviridae</taxon>
        <taxon>Asfivirus</taxon>
        <taxon>African swine fever virus</taxon>
    </lineage>
</organism>
<gene>
    <name type="ordered locus">Ken-126</name>
</gene>
<protein>
    <recommendedName>
        <fullName>Uncharacterized protein H171R</fullName>
        <shortName>pH171R</shortName>
    </recommendedName>
</protein>
<keyword id="KW-0426">Late protein</keyword>
<keyword id="KW-0946">Virion</keyword>
<evidence type="ECO:0000250" key="1">
    <source>
        <dbReference type="UniProtKB" id="Q65185"/>
    </source>
</evidence>
<evidence type="ECO:0000256" key="2">
    <source>
        <dbReference type="SAM" id="MobiDB-lite"/>
    </source>
</evidence>
<evidence type="ECO:0000305" key="3"/>
<dbReference type="EMBL" id="AY261360">
    <property type="status" value="NOT_ANNOTATED_CDS"/>
    <property type="molecule type" value="Genomic_DNA"/>
</dbReference>
<dbReference type="SMR" id="P0CA73"/>
<dbReference type="Proteomes" id="UP000000861">
    <property type="component" value="Segment"/>
</dbReference>
<dbReference type="GO" id="GO:0044423">
    <property type="term" value="C:virion component"/>
    <property type="evidence" value="ECO:0007669"/>
    <property type="project" value="UniProtKB-KW"/>
</dbReference>
<organismHost>
    <name type="scientific">Ornithodoros</name>
    <name type="common">relapsing fever ticks</name>
    <dbReference type="NCBI Taxonomy" id="6937"/>
</organismHost>
<organismHost>
    <name type="scientific">Phacochoerus aethiopicus</name>
    <name type="common">Warthog</name>
    <dbReference type="NCBI Taxonomy" id="85517"/>
</organismHost>
<organismHost>
    <name type="scientific">Phacochoerus africanus</name>
    <name type="common">Warthog</name>
    <dbReference type="NCBI Taxonomy" id="41426"/>
</organismHost>
<organismHost>
    <name type="scientific">Potamochoerus larvatus</name>
    <name type="common">Bushpig</name>
    <dbReference type="NCBI Taxonomy" id="273792"/>
</organismHost>
<organismHost>
    <name type="scientific">Sus scrofa</name>
    <name type="common">Pig</name>
    <dbReference type="NCBI Taxonomy" id="9823"/>
</organismHost>